<evidence type="ECO:0000255" key="1">
    <source>
        <dbReference type="HAMAP-Rule" id="MF_00148"/>
    </source>
</evidence>
<name>UNG_ACTP7</name>
<proteinExistence type="inferred from homology"/>
<accession>B3H0M4</accession>
<protein>
    <recommendedName>
        <fullName evidence="1">Uracil-DNA glycosylase</fullName>
        <shortName evidence="1">UDG</shortName>
        <ecNumber evidence="1">3.2.2.27</ecNumber>
    </recommendedName>
</protein>
<sequence length="225" mass="25693">MNNWTEALGEEKQQPYFQHILQQVHQERMNGVTVFPPQKEVFSAFALTEFKDVKVVILGQDPYHGPNQAHGLAFSVKPPVAPPPSLVNMYKELAQDVEGFQIPNHGYLVDWAKQGVLLLNTVLTVRQGQAHSHANFGWEIFTDKVIAQLNQHRENLVFLLWGSHAQKKGQFIDRSRHCVLTAPHPSPLSAYRGFFGCKHFSKTNRYLLSKGIAPINWQLRLEIDY</sequence>
<dbReference type="EC" id="3.2.2.27" evidence="1"/>
<dbReference type="EMBL" id="CP001091">
    <property type="protein sequence ID" value="ACE61036.1"/>
    <property type="molecule type" value="Genomic_DNA"/>
</dbReference>
<dbReference type="RefSeq" id="WP_005596359.1">
    <property type="nucleotide sequence ID" value="NC_010939.1"/>
</dbReference>
<dbReference type="SMR" id="B3H0M4"/>
<dbReference type="GeneID" id="48598528"/>
<dbReference type="KEGG" id="apa:APP7_0384"/>
<dbReference type="HOGENOM" id="CLU_032162_3_0_6"/>
<dbReference type="Proteomes" id="UP000001226">
    <property type="component" value="Chromosome"/>
</dbReference>
<dbReference type="GO" id="GO:0005737">
    <property type="term" value="C:cytoplasm"/>
    <property type="evidence" value="ECO:0007669"/>
    <property type="project" value="UniProtKB-SubCell"/>
</dbReference>
<dbReference type="GO" id="GO:0004844">
    <property type="term" value="F:uracil DNA N-glycosylase activity"/>
    <property type="evidence" value="ECO:0007669"/>
    <property type="project" value="UniProtKB-UniRule"/>
</dbReference>
<dbReference type="GO" id="GO:0097510">
    <property type="term" value="P:base-excision repair, AP site formation via deaminated base removal"/>
    <property type="evidence" value="ECO:0007669"/>
    <property type="project" value="TreeGrafter"/>
</dbReference>
<dbReference type="CDD" id="cd10027">
    <property type="entry name" value="UDG-F1-like"/>
    <property type="match status" value="1"/>
</dbReference>
<dbReference type="FunFam" id="3.40.470.10:FF:000001">
    <property type="entry name" value="Uracil-DNA glycosylase"/>
    <property type="match status" value="1"/>
</dbReference>
<dbReference type="Gene3D" id="3.40.470.10">
    <property type="entry name" value="Uracil-DNA glycosylase-like domain"/>
    <property type="match status" value="1"/>
</dbReference>
<dbReference type="HAMAP" id="MF_00148">
    <property type="entry name" value="UDG"/>
    <property type="match status" value="1"/>
</dbReference>
<dbReference type="InterPro" id="IPR002043">
    <property type="entry name" value="UDG_fam1"/>
</dbReference>
<dbReference type="InterPro" id="IPR018085">
    <property type="entry name" value="Ura-DNA_Glyclase_AS"/>
</dbReference>
<dbReference type="InterPro" id="IPR005122">
    <property type="entry name" value="Uracil-DNA_glycosylase-like"/>
</dbReference>
<dbReference type="InterPro" id="IPR036895">
    <property type="entry name" value="Uracil-DNA_glycosylase-like_sf"/>
</dbReference>
<dbReference type="NCBIfam" id="NF003588">
    <property type="entry name" value="PRK05254.1-1"/>
    <property type="match status" value="1"/>
</dbReference>
<dbReference type="NCBIfam" id="NF003589">
    <property type="entry name" value="PRK05254.1-2"/>
    <property type="match status" value="1"/>
</dbReference>
<dbReference type="NCBIfam" id="NF003591">
    <property type="entry name" value="PRK05254.1-4"/>
    <property type="match status" value="1"/>
</dbReference>
<dbReference type="NCBIfam" id="NF003592">
    <property type="entry name" value="PRK05254.1-5"/>
    <property type="match status" value="1"/>
</dbReference>
<dbReference type="NCBIfam" id="TIGR00628">
    <property type="entry name" value="ung"/>
    <property type="match status" value="1"/>
</dbReference>
<dbReference type="PANTHER" id="PTHR11264">
    <property type="entry name" value="URACIL-DNA GLYCOSYLASE"/>
    <property type="match status" value="1"/>
</dbReference>
<dbReference type="PANTHER" id="PTHR11264:SF0">
    <property type="entry name" value="URACIL-DNA GLYCOSYLASE"/>
    <property type="match status" value="1"/>
</dbReference>
<dbReference type="Pfam" id="PF03167">
    <property type="entry name" value="UDG"/>
    <property type="match status" value="1"/>
</dbReference>
<dbReference type="SMART" id="SM00986">
    <property type="entry name" value="UDG"/>
    <property type="match status" value="1"/>
</dbReference>
<dbReference type="SMART" id="SM00987">
    <property type="entry name" value="UreE_C"/>
    <property type="match status" value="1"/>
</dbReference>
<dbReference type="SUPFAM" id="SSF52141">
    <property type="entry name" value="Uracil-DNA glycosylase-like"/>
    <property type="match status" value="1"/>
</dbReference>
<dbReference type="PROSITE" id="PS00130">
    <property type="entry name" value="U_DNA_GLYCOSYLASE"/>
    <property type="match status" value="1"/>
</dbReference>
<organism>
    <name type="scientific">Actinobacillus pleuropneumoniae serotype 7 (strain AP76)</name>
    <dbReference type="NCBI Taxonomy" id="537457"/>
    <lineage>
        <taxon>Bacteria</taxon>
        <taxon>Pseudomonadati</taxon>
        <taxon>Pseudomonadota</taxon>
        <taxon>Gammaproteobacteria</taxon>
        <taxon>Pasteurellales</taxon>
        <taxon>Pasteurellaceae</taxon>
        <taxon>Actinobacillus</taxon>
    </lineage>
</organism>
<keyword id="KW-0963">Cytoplasm</keyword>
<keyword id="KW-0227">DNA damage</keyword>
<keyword id="KW-0234">DNA repair</keyword>
<keyword id="KW-0378">Hydrolase</keyword>
<feature type="chain" id="PRO_1000096560" description="Uracil-DNA glycosylase">
    <location>
        <begin position="1"/>
        <end position="225"/>
    </location>
</feature>
<feature type="active site" description="Proton acceptor" evidence="1">
    <location>
        <position position="61"/>
    </location>
</feature>
<reference key="1">
    <citation type="submission" date="2008-06" db="EMBL/GenBank/DDBJ databases">
        <title>Genome and proteome analysis of A. pleuropneumoniae serotype 7.</title>
        <authorList>
            <person name="Linke B."/>
            <person name="Buettner F."/>
            <person name="Martinez-Arias R."/>
            <person name="Goesmann A."/>
            <person name="Baltes N."/>
            <person name="Tegetmeyer H."/>
            <person name="Singh M."/>
            <person name="Gerlach G.F."/>
        </authorList>
    </citation>
    <scope>NUCLEOTIDE SEQUENCE [LARGE SCALE GENOMIC DNA]</scope>
    <source>
        <strain>AP76</strain>
    </source>
</reference>
<gene>
    <name evidence="1" type="primary">ung</name>
    <name type="ordered locus">APP7_0384</name>
</gene>
<comment type="function">
    <text evidence="1">Excises uracil residues from the DNA which can arise as a result of misincorporation of dUMP residues by DNA polymerase or due to deamination of cytosine.</text>
</comment>
<comment type="catalytic activity">
    <reaction evidence="1">
        <text>Hydrolyzes single-stranded DNA or mismatched double-stranded DNA and polynucleotides, releasing free uracil.</text>
        <dbReference type="EC" id="3.2.2.27"/>
    </reaction>
</comment>
<comment type="subcellular location">
    <subcellularLocation>
        <location evidence="1">Cytoplasm</location>
    </subcellularLocation>
</comment>
<comment type="similarity">
    <text evidence="1">Belongs to the uracil-DNA glycosylase (UDG) superfamily. UNG family.</text>
</comment>